<organism>
    <name type="scientific">Salmonella arizonae (strain ATCC BAA-731 / CDC346-86 / RSK2980)</name>
    <dbReference type="NCBI Taxonomy" id="41514"/>
    <lineage>
        <taxon>Bacteria</taxon>
        <taxon>Pseudomonadati</taxon>
        <taxon>Pseudomonadota</taxon>
        <taxon>Gammaproteobacteria</taxon>
        <taxon>Enterobacterales</taxon>
        <taxon>Enterobacteriaceae</taxon>
        <taxon>Salmonella</taxon>
    </lineage>
</organism>
<keyword id="KW-0067">ATP-binding</keyword>
<keyword id="KW-0143">Chaperone</keyword>
<keyword id="KW-0963">Cytoplasm</keyword>
<keyword id="KW-0413">Isomerase</keyword>
<keyword id="KW-0547">Nucleotide-binding</keyword>
<keyword id="KW-1185">Reference proteome</keyword>
<reference key="1">
    <citation type="submission" date="2007-11" db="EMBL/GenBank/DDBJ databases">
        <authorList>
            <consortium name="The Salmonella enterica serovar Arizonae Genome Sequencing Project"/>
            <person name="McClelland M."/>
            <person name="Sanderson E.K."/>
            <person name="Porwollik S."/>
            <person name="Spieth J."/>
            <person name="Clifton W.S."/>
            <person name="Fulton R."/>
            <person name="Chunyan W."/>
            <person name="Wollam A."/>
            <person name="Shah N."/>
            <person name="Pepin K."/>
            <person name="Bhonagiri V."/>
            <person name="Nash W."/>
            <person name="Johnson M."/>
            <person name="Thiruvilangam P."/>
            <person name="Wilson R."/>
        </authorList>
    </citation>
    <scope>NUCLEOTIDE SEQUENCE [LARGE SCALE GENOMIC DNA]</scope>
    <source>
        <strain>ATCC BAA-731 / CDC346-86 / RSK2980</strain>
    </source>
</reference>
<feature type="chain" id="PRO_1000082486" description="Chaperonin GroEL">
    <location>
        <begin position="1"/>
        <end position="548"/>
    </location>
</feature>
<feature type="binding site" evidence="1">
    <location>
        <begin position="30"/>
        <end position="33"/>
    </location>
    <ligand>
        <name>ATP</name>
        <dbReference type="ChEBI" id="CHEBI:30616"/>
    </ligand>
</feature>
<feature type="binding site" evidence="1">
    <location>
        <position position="51"/>
    </location>
    <ligand>
        <name>ATP</name>
        <dbReference type="ChEBI" id="CHEBI:30616"/>
    </ligand>
</feature>
<feature type="binding site" evidence="1">
    <location>
        <begin position="87"/>
        <end position="91"/>
    </location>
    <ligand>
        <name>ATP</name>
        <dbReference type="ChEBI" id="CHEBI:30616"/>
    </ligand>
</feature>
<feature type="binding site" evidence="1">
    <location>
        <position position="415"/>
    </location>
    <ligand>
        <name>ATP</name>
        <dbReference type="ChEBI" id="CHEBI:30616"/>
    </ligand>
</feature>
<feature type="binding site" evidence="1">
    <location>
        <begin position="479"/>
        <end position="481"/>
    </location>
    <ligand>
        <name>ATP</name>
        <dbReference type="ChEBI" id="CHEBI:30616"/>
    </ligand>
</feature>
<feature type="binding site" evidence="1">
    <location>
        <position position="495"/>
    </location>
    <ligand>
        <name>ATP</name>
        <dbReference type="ChEBI" id="CHEBI:30616"/>
    </ligand>
</feature>
<evidence type="ECO:0000255" key="1">
    <source>
        <dbReference type="HAMAP-Rule" id="MF_00600"/>
    </source>
</evidence>
<sequence>MAAKDVKFGNDARVKMLRGVNVLADAVKVTLGPKGRNVVLDKSFGAPNITKDGVSVAREIELEDKFENMGAQMVKEVASKANDAAGDGTTTATVLAQSIITEGLKAVAAGMNPMDLKRGIDKAVAAAVEELKALSVPCSDSKAIAQVGTISANSDETVGKLIAEAMDKVGKEGVITVEDGTGLQDELDVVEGMQFDRGYLSPYFINKPETGAVELESPFILLADKKISNIREMLPVLEAVAKAGKPLLIIAEDVEGEALATLVVNTMRGIVKVAAVKAPGFGDRRKAMLQDIATLTGGTVISEEIGMELEKATLEDLGQAKRVVINKDTTTIIDGVGEEAAIQGRVAQIRQQIEEATSDYDREKLQERVAKLAGGVAVIKVGAATEVEMKEKKARVEDALHATRAAVEEGVVAGGGVALIRVASKIADLKGQNEDQNVGIKVALRAMEAPLRQIVLNCGEEPSVVANTVKGGDGNYGYNAATEEYGNMIDMGILDPTKVTRSALQYAASVAGLMITTECMVTDLPKSDAPDLGAAGGMGGMGGMGGMM</sequence>
<comment type="function">
    <text evidence="1">Together with its co-chaperonin GroES, plays an essential role in assisting protein folding. The GroEL-GroES system forms a nano-cage that allows encapsulation of the non-native substrate proteins and provides a physical environment optimized to promote and accelerate protein folding.</text>
</comment>
<comment type="catalytic activity">
    <reaction evidence="1">
        <text>ATP + H2O + a folded polypeptide = ADP + phosphate + an unfolded polypeptide.</text>
        <dbReference type="EC" id="5.6.1.7"/>
    </reaction>
</comment>
<comment type="subunit">
    <text evidence="1">Forms a cylinder of 14 subunits composed of two heptameric rings stacked back-to-back. Interacts with the co-chaperonin GroES.</text>
</comment>
<comment type="subcellular location">
    <subcellularLocation>
        <location evidence="1">Cytoplasm</location>
    </subcellularLocation>
</comment>
<comment type="similarity">
    <text evidence="1">Belongs to the chaperonin (HSP60) family.</text>
</comment>
<dbReference type="EC" id="5.6.1.7" evidence="1"/>
<dbReference type="EMBL" id="CP000880">
    <property type="protein sequence ID" value="ABX23135.1"/>
    <property type="molecule type" value="Genomic_DNA"/>
</dbReference>
<dbReference type="BMRB" id="A9MFR9"/>
<dbReference type="SMR" id="A9MFR9"/>
<dbReference type="STRING" id="41514.SARI_03302"/>
<dbReference type="KEGG" id="ses:SARI_03302"/>
<dbReference type="HOGENOM" id="CLU_016503_3_0_6"/>
<dbReference type="Proteomes" id="UP000002084">
    <property type="component" value="Chromosome"/>
</dbReference>
<dbReference type="GO" id="GO:0005737">
    <property type="term" value="C:cytoplasm"/>
    <property type="evidence" value="ECO:0007669"/>
    <property type="project" value="UniProtKB-SubCell"/>
</dbReference>
<dbReference type="GO" id="GO:0005524">
    <property type="term" value="F:ATP binding"/>
    <property type="evidence" value="ECO:0007669"/>
    <property type="project" value="UniProtKB-UniRule"/>
</dbReference>
<dbReference type="GO" id="GO:0140662">
    <property type="term" value="F:ATP-dependent protein folding chaperone"/>
    <property type="evidence" value="ECO:0007669"/>
    <property type="project" value="InterPro"/>
</dbReference>
<dbReference type="GO" id="GO:0016853">
    <property type="term" value="F:isomerase activity"/>
    <property type="evidence" value="ECO:0007669"/>
    <property type="project" value="UniProtKB-KW"/>
</dbReference>
<dbReference type="GO" id="GO:0051082">
    <property type="term" value="F:unfolded protein binding"/>
    <property type="evidence" value="ECO:0007669"/>
    <property type="project" value="UniProtKB-UniRule"/>
</dbReference>
<dbReference type="GO" id="GO:0042026">
    <property type="term" value="P:protein refolding"/>
    <property type="evidence" value="ECO:0007669"/>
    <property type="project" value="UniProtKB-UniRule"/>
</dbReference>
<dbReference type="CDD" id="cd03344">
    <property type="entry name" value="GroEL"/>
    <property type="match status" value="1"/>
</dbReference>
<dbReference type="FunFam" id="1.10.560.10:FF:000001">
    <property type="entry name" value="60 kDa chaperonin"/>
    <property type="match status" value="1"/>
</dbReference>
<dbReference type="FunFam" id="3.50.7.10:FF:000001">
    <property type="entry name" value="60 kDa chaperonin"/>
    <property type="match status" value="1"/>
</dbReference>
<dbReference type="Gene3D" id="3.50.7.10">
    <property type="entry name" value="GroEL"/>
    <property type="match status" value="1"/>
</dbReference>
<dbReference type="Gene3D" id="1.10.560.10">
    <property type="entry name" value="GroEL-like equatorial domain"/>
    <property type="match status" value="1"/>
</dbReference>
<dbReference type="Gene3D" id="3.30.260.10">
    <property type="entry name" value="TCP-1-like chaperonin intermediate domain"/>
    <property type="match status" value="1"/>
</dbReference>
<dbReference type="HAMAP" id="MF_00600">
    <property type="entry name" value="CH60"/>
    <property type="match status" value="1"/>
</dbReference>
<dbReference type="InterPro" id="IPR018370">
    <property type="entry name" value="Chaperonin_Cpn60_CS"/>
</dbReference>
<dbReference type="InterPro" id="IPR001844">
    <property type="entry name" value="Cpn60/GroEL"/>
</dbReference>
<dbReference type="InterPro" id="IPR002423">
    <property type="entry name" value="Cpn60/GroEL/TCP-1"/>
</dbReference>
<dbReference type="InterPro" id="IPR027409">
    <property type="entry name" value="GroEL-like_apical_dom_sf"/>
</dbReference>
<dbReference type="InterPro" id="IPR027413">
    <property type="entry name" value="GROEL-like_equatorial_sf"/>
</dbReference>
<dbReference type="InterPro" id="IPR027410">
    <property type="entry name" value="TCP-1-like_intermed_sf"/>
</dbReference>
<dbReference type="NCBIfam" id="TIGR02348">
    <property type="entry name" value="GroEL"/>
    <property type="match status" value="1"/>
</dbReference>
<dbReference type="NCBIfam" id="NF000592">
    <property type="entry name" value="PRK00013.1"/>
    <property type="match status" value="1"/>
</dbReference>
<dbReference type="NCBIfam" id="NF009487">
    <property type="entry name" value="PRK12849.1"/>
    <property type="match status" value="1"/>
</dbReference>
<dbReference type="NCBIfam" id="NF009488">
    <property type="entry name" value="PRK12850.1"/>
    <property type="match status" value="1"/>
</dbReference>
<dbReference type="NCBIfam" id="NF009489">
    <property type="entry name" value="PRK12851.1"/>
    <property type="match status" value="1"/>
</dbReference>
<dbReference type="PANTHER" id="PTHR45633">
    <property type="entry name" value="60 KDA HEAT SHOCK PROTEIN, MITOCHONDRIAL"/>
    <property type="match status" value="1"/>
</dbReference>
<dbReference type="Pfam" id="PF00118">
    <property type="entry name" value="Cpn60_TCP1"/>
    <property type="match status" value="1"/>
</dbReference>
<dbReference type="PRINTS" id="PR00298">
    <property type="entry name" value="CHAPERONIN60"/>
</dbReference>
<dbReference type="SUPFAM" id="SSF52029">
    <property type="entry name" value="GroEL apical domain-like"/>
    <property type="match status" value="1"/>
</dbReference>
<dbReference type="SUPFAM" id="SSF48592">
    <property type="entry name" value="GroEL equatorial domain-like"/>
    <property type="match status" value="1"/>
</dbReference>
<dbReference type="SUPFAM" id="SSF54849">
    <property type="entry name" value="GroEL-intermediate domain like"/>
    <property type="match status" value="1"/>
</dbReference>
<dbReference type="PROSITE" id="PS00296">
    <property type="entry name" value="CHAPERONINS_CPN60"/>
    <property type="match status" value="1"/>
</dbReference>
<protein>
    <recommendedName>
        <fullName evidence="1">Chaperonin GroEL</fullName>
        <ecNumber evidence="1">5.6.1.7</ecNumber>
    </recommendedName>
    <alternativeName>
        <fullName evidence="1">60 kDa chaperonin</fullName>
    </alternativeName>
    <alternativeName>
        <fullName evidence="1">Chaperonin-60</fullName>
        <shortName evidence="1">Cpn60</shortName>
    </alternativeName>
</protein>
<accession>A9MFR9</accession>
<proteinExistence type="inferred from homology"/>
<name>CH60_SALAR</name>
<gene>
    <name evidence="1" type="primary">groEL</name>
    <name evidence="1" type="synonym">groL</name>
    <name type="ordered locus">SARI_03302</name>
</gene>